<keyword id="KW-0002">3D-structure</keyword>
<keyword id="KW-0276">Fatty acid metabolism</keyword>
<keyword id="KW-0349">Heme</keyword>
<keyword id="KW-0408">Iron</keyword>
<keyword id="KW-0443">Lipid metabolism</keyword>
<keyword id="KW-0479">Metal-binding</keyword>
<keyword id="KW-0503">Monooxygenase</keyword>
<keyword id="KW-0521">NADP</keyword>
<keyword id="KW-0560">Oxidoreductase</keyword>
<keyword id="KW-1185">Reference proteome</keyword>
<protein>
    <recommendedName>
        <fullName evidence="3">Methyl-branched lipid omega-hydroxylase</fullName>
        <ecNumber evidence="1">1.14.15.14</ecNumber>
    </recommendedName>
    <alternativeName>
        <fullName evidence="4">Cholest-4-en-3-one C26-monooxygenase</fullName>
    </alternativeName>
    <alternativeName>
        <fullName evidence="4">Cholest-4-en-3-one C26-monooxygenase [(25R)-3-oxocholest-4-en-26-oate forming]</fullName>
    </alternativeName>
    <alternativeName>
        <fullName evidence="4">Cholesterol C26-monooxygenase</fullName>
    </alternativeName>
    <alternativeName>
        <fullName evidence="4">Cholesterol C26-monooxygenase [(25R)-3beta-hydroxycholest-5-en-26-oate forming]</fullName>
    </alternativeName>
    <alternativeName>
        <fullName evidence="3">Cytochrome P450 124</fullName>
    </alternativeName>
    <alternativeName>
        <fullName evidence="4">Steroid C26-monooxygenase</fullName>
        <ecNumber evidence="2">1.14.15.28</ecNumber>
    </alternativeName>
    <alternativeName>
        <fullName evidence="4">Steroid C27-monooxygenase</fullName>
    </alternativeName>
</protein>
<organism>
    <name type="scientific">Mycobacterium tuberculosis (strain ATCC 25618 / H37Rv)</name>
    <dbReference type="NCBI Taxonomy" id="83332"/>
    <lineage>
        <taxon>Bacteria</taxon>
        <taxon>Bacillati</taxon>
        <taxon>Actinomycetota</taxon>
        <taxon>Actinomycetes</taxon>
        <taxon>Mycobacteriales</taxon>
        <taxon>Mycobacteriaceae</taxon>
        <taxon>Mycobacterium</taxon>
        <taxon>Mycobacterium tuberculosis complex</taxon>
    </lineage>
</organism>
<reference key="1">
    <citation type="journal article" date="1998" name="Nature">
        <title>Deciphering the biology of Mycobacterium tuberculosis from the complete genome sequence.</title>
        <authorList>
            <person name="Cole S.T."/>
            <person name="Brosch R."/>
            <person name="Parkhill J."/>
            <person name="Garnier T."/>
            <person name="Churcher C.M."/>
            <person name="Harris D.E."/>
            <person name="Gordon S.V."/>
            <person name="Eiglmeier K."/>
            <person name="Gas S."/>
            <person name="Barry C.E. III"/>
            <person name="Tekaia F."/>
            <person name="Badcock K."/>
            <person name="Basham D."/>
            <person name="Brown D."/>
            <person name="Chillingworth T."/>
            <person name="Connor R."/>
            <person name="Davies R.M."/>
            <person name="Devlin K."/>
            <person name="Feltwell T."/>
            <person name="Gentles S."/>
            <person name="Hamlin N."/>
            <person name="Holroyd S."/>
            <person name="Hornsby T."/>
            <person name="Jagels K."/>
            <person name="Krogh A."/>
            <person name="McLean J."/>
            <person name="Moule S."/>
            <person name="Murphy L.D."/>
            <person name="Oliver S."/>
            <person name="Osborne J."/>
            <person name="Quail M.A."/>
            <person name="Rajandream M.A."/>
            <person name="Rogers J."/>
            <person name="Rutter S."/>
            <person name="Seeger K."/>
            <person name="Skelton S."/>
            <person name="Squares S."/>
            <person name="Squares R."/>
            <person name="Sulston J.E."/>
            <person name="Taylor K."/>
            <person name="Whitehead S."/>
            <person name="Barrell B.G."/>
        </authorList>
    </citation>
    <scope>NUCLEOTIDE SEQUENCE [LARGE SCALE GENOMIC DNA]</scope>
    <source>
        <strain>ATCC 25618 / H37Rv</strain>
    </source>
</reference>
<reference key="2">
    <citation type="journal article" date="2010" name="J. Biol. Chem.">
        <title>Functional redundancy of steroid C26-monooxygenase activity in Mycobacterium tuberculosis revealed by biochemical and genetic analyses.</title>
        <authorList>
            <person name="Johnston J.B."/>
            <person name="Ouellet H."/>
            <person name="Ortiz de Montellano P.R."/>
        </authorList>
    </citation>
    <scope>FUNCTION</scope>
    <scope>CATALYTIC ACTIVITY</scope>
    <scope>BIOPHYSICOCHEMICAL PROPERTIES</scope>
    <scope>COFACTOR</scope>
    <scope>SUBSTRATE SPECIFICITY</scope>
</reference>
<reference key="3">
    <citation type="journal article" date="2009" name="Proc. Natl. Acad. Sci. U.S.A.">
        <title>Biochemical and structural characterization of CYP124: a methyl-branched lipid omega-hydroxylase from Mycobacterium tuberculosis.</title>
        <authorList>
            <person name="Johnston J.B."/>
            <person name="Kells P.M."/>
            <person name="Podust L.M."/>
            <person name="Ortiz de Montellano P.R."/>
        </authorList>
    </citation>
    <scope>X-RAY CRYSTALLOGRAPHY (1.50 ANGSTROMS) IN COMPLEX WITH (3R,7S,11S)-3,7,11,15-TETRAMETHYLHEXADECANOIC ACID (PHYTANIC ACID) AND HEME</scope>
    <scope>FUNCTION</scope>
    <scope>CATALYTIC ACTIVITY</scope>
    <scope>SUBSTRATE SPECIFICITY</scope>
    <scope>COFACTOR</scope>
    <scope>PATHWAY</scope>
    <scope>BIOPHYSICOCHEMICAL PROPERTIES</scope>
    <source>
        <strain>H37Rv</strain>
    </source>
</reference>
<comment type="function">
    <text evidence="1 2">Primarily hydroxylates the omega-carbon of a number of methyl-branched lipids, including (2E,6E)-farnesol, phytanate, geranylgeraniol, 15-methylpalmitate and (2E,6E)-farnesyl diphosphate (PubMed:19933331). Also catalyzes the sequential oxidation of the terminal methyl of cholest-4-en-3-one into (25R)-26-hydroxycholest-4-en-3-one (alcohol), (25R)-26-oxocholest-4-en-3-one (aldehyde), to finally yield the carboxylic acid (25R)-3-oxocholest-4-en-26-oate (PubMed:20843794). Cyp124 catalyzes preferentially the oxidation of (25R)-26-hydroxycholest-4-en-3-one diastereomer (PubMed:20843794). Also able to sequentially oxidize cholesterol itself, not only cholest-4-en-3-one (PubMed:20843794).</text>
</comment>
<comment type="catalytic activity">
    <reaction evidence="1">
        <text>a methyl-branched lipid + O2 + 2 reduced ferredoxin [iron-sulfur] cluster + 2 H(+) = an omega-hydroxy-methyl-branched lipid + H2O + 2 oxidized ferredoxin [iron-sulfur] cluster.</text>
        <dbReference type="EC" id="1.14.15.14"/>
    </reaction>
</comment>
<comment type="catalytic activity">
    <reaction evidence="2">
        <text>cholest-4-en-3-one + 6 reduced [2Fe-2S]-[ferredoxin] + 3 O2 + 5 H(+) = (25R)-3-oxocholest-4-en-26-oate + 6 oxidized [2Fe-2S]-[ferredoxin] + 4 H2O</text>
        <dbReference type="Rhea" id="RHEA:49996"/>
        <dbReference type="Rhea" id="RHEA-COMP:10000"/>
        <dbReference type="Rhea" id="RHEA-COMP:10001"/>
        <dbReference type="ChEBI" id="CHEBI:15377"/>
        <dbReference type="ChEBI" id="CHEBI:15378"/>
        <dbReference type="ChEBI" id="CHEBI:15379"/>
        <dbReference type="ChEBI" id="CHEBI:16175"/>
        <dbReference type="ChEBI" id="CHEBI:33737"/>
        <dbReference type="ChEBI" id="CHEBI:33738"/>
        <dbReference type="ChEBI" id="CHEBI:71570"/>
        <dbReference type="EC" id="1.14.15.28"/>
    </reaction>
</comment>
<comment type="catalytic activity">
    <reaction evidence="1">
        <text>15-methylhexadecanoate + NADPH + O2 + H(+) = omega-hydroxy-15-methyl-hexadecanoate + NADP(+) + H2O</text>
        <dbReference type="Rhea" id="RHEA:43956"/>
        <dbReference type="ChEBI" id="CHEBI:15377"/>
        <dbReference type="ChEBI" id="CHEBI:15378"/>
        <dbReference type="ChEBI" id="CHEBI:15379"/>
        <dbReference type="ChEBI" id="CHEBI:57783"/>
        <dbReference type="ChEBI" id="CHEBI:58349"/>
        <dbReference type="ChEBI" id="CHEBI:70838"/>
        <dbReference type="ChEBI" id="CHEBI:83914"/>
    </reaction>
    <physiologicalReaction direction="left-to-right" evidence="1">
        <dbReference type="Rhea" id="RHEA:43957"/>
    </physiologicalReaction>
</comment>
<comment type="catalytic activity">
    <reaction evidence="1">
        <text>3,7,11,15-tetramethylhexadecanoate + NADPH + O2 + H(+) = omega-hydroxy-3,7,11,15-tetramethyl-hexadecanoate + NADP(+) + H2O</text>
        <dbReference type="Rhea" id="RHEA:43952"/>
        <dbReference type="ChEBI" id="CHEBI:15377"/>
        <dbReference type="ChEBI" id="CHEBI:15378"/>
        <dbReference type="ChEBI" id="CHEBI:15379"/>
        <dbReference type="ChEBI" id="CHEBI:37257"/>
        <dbReference type="ChEBI" id="CHEBI:57783"/>
        <dbReference type="ChEBI" id="CHEBI:58349"/>
        <dbReference type="ChEBI" id="CHEBI:83916"/>
    </reaction>
    <physiologicalReaction direction="left-to-right" evidence="1">
        <dbReference type="Rhea" id="RHEA:43953"/>
    </physiologicalReaction>
</comment>
<comment type="catalytic activity">
    <reaction evidence="1">
        <text>(2E,6E)-farnesyl diphosphate + NADPH + O2 + H(+) = (2E,6E)-omega-hydroxy-farnesyl diphosphate + NADP(+) + H2O</text>
        <dbReference type="Rhea" id="RHEA:43988"/>
        <dbReference type="ChEBI" id="CHEBI:15377"/>
        <dbReference type="ChEBI" id="CHEBI:15378"/>
        <dbReference type="ChEBI" id="CHEBI:15379"/>
        <dbReference type="ChEBI" id="CHEBI:57783"/>
        <dbReference type="ChEBI" id="CHEBI:58349"/>
        <dbReference type="ChEBI" id="CHEBI:83958"/>
        <dbReference type="ChEBI" id="CHEBI:175763"/>
    </reaction>
    <physiologicalReaction direction="left-to-right" evidence="1">
        <dbReference type="Rhea" id="RHEA:43989"/>
    </physiologicalReaction>
</comment>
<comment type="catalytic activity">
    <reaction evidence="1">
        <text>(2E,6E)-farnesol + NADPH + O2 + H(+) = (2E,6E)-omega-hydroxy-farnesol + NADP(+) + H2O</text>
        <dbReference type="Rhea" id="RHEA:43984"/>
        <dbReference type="ChEBI" id="CHEBI:15377"/>
        <dbReference type="ChEBI" id="CHEBI:15378"/>
        <dbReference type="ChEBI" id="CHEBI:15379"/>
        <dbReference type="ChEBI" id="CHEBI:16619"/>
        <dbReference type="ChEBI" id="CHEBI:57783"/>
        <dbReference type="ChEBI" id="CHEBI:58349"/>
        <dbReference type="ChEBI" id="CHEBI:83951"/>
    </reaction>
    <physiologicalReaction direction="left-to-right" evidence="1">
        <dbReference type="Rhea" id="RHEA:43985"/>
    </physiologicalReaction>
</comment>
<comment type="catalytic activity">
    <reaction evidence="1">
        <text>(2E,6E,10E)-geranylgeraniol + NADPH + O2 + H(+) = 16-hydroxy-(2E,6E,10E)-geranylgeraniol + NADP(+) + H2O</text>
        <dbReference type="Rhea" id="RHEA:43992"/>
        <dbReference type="ChEBI" id="CHEBI:15377"/>
        <dbReference type="ChEBI" id="CHEBI:15378"/>
        <dbReference type="ChEBI" id="CHEBI:15379"/>
        <dbReference type="ChEBI" id="CHEBI:46762"/>
        <dbReference type="ChEBI" id="CHEBI:57783"/>
        <dbReference type="ChEBI" id="CHEBI:58349"/>
        <dbReference type="ChEBI" id="CHEBI:83953"/>
    </reaction>
    <physiologicalReaction direction="left-to-right" evidence="1">
        <dbReference type="Rhea" id="RHEA:43993"/>
    </physiologicalReaction>
</comment>
<comment type="catalytic activity">
    <reaction evidence="1">
        <text>(2E,6E,10E)-geranylgeraniol + 2 NADPH + 2 O2 + H(+) = (2E,6E,10E)-geranylgeranate + 2 NADP(+) + 3 H2O</text>
        <dbReference type="Rhea" id="RHEA:46108"/>
        <dbReference type="ChEBI" id="CHEBI:15377"/>
        <dbReference type="ChEBI" id="CHEBI:15378"/>
        <dbReference type="ChEBI" id="CHEBI:15379"/>
        <dbReference type="ChEBI" id="CHEBI:46762"/>
        <dbReference type="ChEBI" id="CHEBI:57783"/>
        <dbReference type="ChEBI" id="CHEBI:58349"/>
        <dbReference type="ChEBI" id="CHEBI:83952"/>
    </reaction>
    <physiologicalReaction direction="left-to-right" evidence="1">
        <dbReference type="Rhea" id="RHEA:46109"/>
    </physiologicalReaction>
</comment>
<comment type="catalytic activity">
    <reaction evidence="2">
        <text>cholest-4-en-3-one + 2 reduced [2Fe-2S]-[ferredoxin] + O2 + 2 H(+) = (25R)-3-oxocholest-4-en-26-ol + 2 oxidized [2Fe-2S]-[ferredoxin] + H2O</text>
        <dbReference type="Rhea" id="RHEA:43912"/>
        <dbReference type="Rhea" id="RHEA-COMP:10000"/>
        <dbReference type="Rhea" id="RHEA-COMP:10001"/>
        <dbReference type="ChEBI" id="CHEBI:15377"/>
        <dbReference type="ChEBI" id="CHEBI:15378"/>
        <dbReference type="ChEBI" id="CHEBI:15379"/>
        <dbReference type="ChEBI" id="CHEBI:16175"/>
        <dbReference type="ChEBI" id="CHEBI:33737"/>
        <dbReference type="ChEBI" id="CHEBI:33738"/>
        <dbReference type="ChEBI" id="CHEBI:83861"/>
    </reaction>
    <physiologicalReaction direction="left-to-right" evidence="2">
        <dbReference type="Rhea" id="RHEA:43913"/>
    </physiologicalReaction>
</comment>
<comment type="catalytic activity">
    <reaction evidence="2">
        <text>cholesterol + NADPH + O2 + H(+) = 26-hydroxycholesterol + NADP(+) + H2O</text>
        <dbReference type="Rhea" id="RHEA:43836"/>
        <dbReference type="ChEBI" id="CHEBI:15377"/>
        <dbReference type="ChEBI" id="CHEBI:15378"/>
        <dbReference type="ChEBI" id="CHEBI:15379"/>
        <dbReference type="ChEBI" id="CHEBI:16113"/>
        <dbReference type="ChEBI" id="CHEBI:17703"/>
        <dbReference type="ChEBI" id="CHEBI:57783"/>
        <dbReference type="ChEBI" id="CHEBI:58349"/>
    </reaction>
    <physiologicalReaction direction="left-to-right" evidence="2">
        <dbReference type="Rhea" id="RHEA:43837"/>
    </physiologicalReaction>
</comment>
<comment type="catalytic activity">
    <reaction evidence="2">
        <text>26-hydroxycholesterol + 2 reduced [2Fe-2S]-[ferredoxin] + O2 + 2 H(+) = (3beta)-hydroxy-cholest-5-en-26-al + 2 oxidized [2Fe-2S]-[ferredoxin] + 2 H2O</text>
        <dbReference type="Rhea" id="RHEA:43840"/>
        <dbReference type="Rhea" id="RHEA-COMP:10000"/>
        <dbReference type="Rhea" id="RHEA-COMP:10001"/>
        <dbReference type="ChEBI" id="CHEBI:15377"/>
        <dbReference type="ChEBI" id="CHEBI:15378"/>
        <dbReference type="ChEBI" id="CHEBI:15379"/>
        <dbReference type="ChEBI" id="CHEBI:17703"/>
        <dbReference type="ChEBI" id="CHEBI:33737"/>
        <dbReference type="ChEBI" id="CHEBI:33738"/>
        <dbReference type="ChEBI" id="CHEBI:84145"/>
    </reaction>
    <physiologicalReaction direction="left-to-right" evidence="2">
        <dbReference type="Rhea" id="RHEA:43841"/>
    </physiologicalReaction>
</comment>
<comment type="catalytic activity">
    <reaction evidence="2">
        <text>(3beta)-hydroxy-cholest-5-en-26-al + NADPH + O2 = (3beta)-hydroxy-cholest-5-en-26-oate + NADP(+) + H2O</text>
        <dbReference type="Rhea" id="RHEA:43844"/>
        <dbReference type="ChEBI" id="CHEBI:15377"/>
        <dbReference type="ChEBI" id="CHEBI:15379"/>
        <dbReference type="ChEBI" id="CHEBI:57783"/>
        <dbReference type="ChEBI" id="CHEBI:58349"/>
        <dbReference type="ChEBI" id="CHEBI:84145"/>
        <dbReference type="ChEBI" id="CHEBI:84146"/>
    </reaction>
    <physiologicalReaction direction="left-to-right" evidence="2">
        <dbReference type="Rhea" id="RHEA:43845"/>
    </physiologicalReaction>
</comment>
<comment type="catalytic activity">
    <reaction evidence="2">
        <text>(25R)-3-oxocholest-4-en-26-ol + 2 reduced [2Fe-2S]-[ferredoxin] + O2 + 2 H(+) = (25R)-3-oxocholest-4-en-26-al + 2 oxidized [2Fe-2S]-[ferredoxin] + 2 H2O</text>
        <dbReference type="Rhea" id="RHEA:43916"/>
        <dbReference type="Rhea" id="RHEA-COMP:10000"/>
        <dbReference type="Rhea" id="RHEA-COMP:10001"/>
        <dbReference type="ChEBI" id="CHEBI:15377"/>
        <dbReference type="ChEBI" id="CHEBI:15378"/>
        <dbReference type="ChEBI" id="CHEBI:15379"/>
        <dbReference type="ChEBI" id="CHEBI:33737"/>
        <dbReference type="ChEBI" id="CHEBI:33738"/>
        <dbReference type="ChEBI" id="CHEBI:83861"/>
        <dbReference type="ChEBI" id="CHEBI:83862"/>
    </reaction>
    <physiologicalReaction direction="left-to-right" evidence="2">
        <dbReference type="Rhea" id="RHEA:43917"/>
    </physiologicalReaction>
</comment>
<comment type="catalytic activity">
    <reaction evidence="2">
        <text>(25R)-3-oxocholest-4-en-26-al + 2 reduced [2Fe-2S]-[ferredoxin] + O2 + H(+) = (25R)-3-oxocholest-4-en-26-oate + 2 oxidized [2Fe-2S]-[ferredoxin] + H2O</text>
        <dbReference type="Rhea" id="RHEA:43920"/>
        <dbReference type="Rhea" id="RHEA-COMP:10000"/>
        <dbReference type="Rhea" id="RHEA-COMP:10001"/>
        <dbReference type="ChEBI" id="CHEBI:15377"/>
        <dbReference type="ChEBI" id="CHEBI:15378"/>
        <dbReference type="ChEBI" id="CHEBI:15379"/>
        <dbReference type="ChEBI" id="CHEBI:33737"/>
        <dbReference type="ChEBI" id="CHEBI:33738"/>
        <dbReference type="ChEBI" id="CHEBI:71570"/>
        <dbReference type="ChEBI" id="CHEBI:83862"/>
    </reaction>
    <physiologicalReaction direction="left-to-right" evidence="2">
        <dbReference type="Rhea" id="RHEA:43921"/>
    </physiologicalReaction>
</comment>
<comment type="catalytic activity">
    <reaction evidence="2">
        <text>(25S)-3-oxocholest-4-en-26-ol + 2 reduced [2Fe-2S]-[ferredoxin] + O2 + 2 H(+) = (25S)-3-oxocholest-4-en-26-al + 2 oxidized [2Fe-2S]-[ferredoxin] + 2 H2O</text>
        <dbReference type="Rhea" id="RHEA:51568"/>
        <dbReference type="Rhea" id="RHEA-COMP:10000"/>
        <dbReference type="Rhea" id="RHEA-COMP:10001"/>
        <dbReference type="ChEBI" id="CHEBI:15377"/>
        <dbReference type="ChEBI" id="CHEBI:15378"/>
        <dbReference type="ChEBI" id="CHEBI:15379"/>
        <dbReference type="ChEBI" id="CHEBI:33737"/>
        <dbReference type="ChEBI" id="CHEBI:33738"/>
        <dbReference type="ChEBI" id="CHEBI:83860"/>
        <dbReference type="ChEBI" id="CHEBI:83863"/>
    </reaction>
    <physiologicalReaction direction="left-to-right" evidence="2">
        <dbReference type="Rhea" id="RHEA:51569"/>
    </physiologicalReaction>
</comment>
<comment type="catalytic activity">
    <reaction evidence="2">
        <text>(25S)-3-oxocholest-4-en-26-al + 2 reduced [2Fe-2S]-[ferredoxin] + O2 + H(+) = (25S)-3-oxocholest-4-en-26-oate + 2 oxidized [2Fe-2S]-[ferredoxin] + H2O</text>
        <dbReference type="Rhea" id="RHEA:51572"/>
        <dbReference type="Rhea" id="RHEA-COMP:10000"/>
        <dbReference type="Rhea" id="RHEA-COMP:10001"/>
        <dbReference type="ChEBI" id="CHEBI:15377"/>
        <dbReference type="ChEBI" id="CHEBI:15378"/>
        <dbReference type="ChEBI" id="CHEBI:15379"/>
        <dbReference type="ChEBI" id="CHEBI:33737"/>
        <dbReference type="ChEBI" id="CHEBI:33738"/>
        <dbReference type="ChEBI" id="CHEBI:71541"/>
        <dbReference type="ChEBI" id="CHEBI:83863"/>
    </reaction>
    <physiologicalReaction direction="left-to-right" evidence="2">
        <dbReference type="Rhea" id="RHEA:51573"/>
    </physiologicalReaction>
</comment>
<comment type="cofactor">
    <cofactor evidence="1 2">
        <name>heme</name>
        <dbReference type="ChEBI" id="CHEBI:30413"/>
    </cofactor>
</comment>
<comment type="biophysicochemical properties">
    <kinetics>
        <KM evidence="1">9 uM for 15-methylpalmitate</KM>
        <KM evidence="2">11.6 uM for cholesterol</KM>
        <KM evidence="2">20.8 uM for cholest-4-en-3-one</KM>
        <KM evidence="1">54 uM for phytanate</KM>
        <KM evidence="1">36 uM for (2E,6E)-farnesol</KM>
        <KM evidence="1">32 uM for geranylgeraniol</KM>
        <text evidence="2">kcat is 11.7 min(-1) for cholesterol as substrate. kcat is 1.5 min(-1) for cholest-4-en-3-one as substrate.</text>
    </kinetics>
</comment>
<comment type="pathway">
    <text evidence="6">Lipid metabolism; branched-chain fatty acid metabolism.</text>
</comment>
<comment type="similarity">
    <text evidence="5">Belongs to the cytochrome P450 family.</text>
</comment>
<gene>
    <name type="primary">cyp124</name>
    <name type="ordered locus">Rv2266</name>
    <name type="ORF">MTCY339.44c</name>
</gene>
<sequence length="428" mass="47825">MGLNTAIATRVNGTPPPEVPIADIELGSLDFWALDDDVRDGAFATLRREAPISFWPTIELPGFVAGNGHWALTKYDDVFYASRHPDIFSSYPNITINDQTPELAEYFGSMIVLDDPRHQRLRSIVSRAFTPKVVARIEAAVRDRAHRLVSSMIANNPDRQADLVSELAGPLPLQIICDMMGIPKADHQRIFHWTNVILGFGDPDLATDFDEFMQVSADIGAYATALAEDRRVNHHDDLTSSLVEAEVDGERLSSREIASFFILLVVAGNETTRNAITHGVLALSRYPEQRDRWWSDFDGLAPTAVEEIVRWASPVVYMRRTLTQDIELRGTKMAAGDKVSLWYCSANRDESKFADPWTFDLARNPNPHLGFGGGGAHFCLGANLARREIRVAFDELRRQMPDVVATEEPARLLSQFIHGIKTLPVTWS</sequence>
<feature type="chain" id="PRO_0000052278" description="Methyl-branched lipid omega-hydroxylase">
    <location>
        <begin position="1"/>
        <end position="428"/>
    </location>
</feature>
<feature type="binding site" description="axial binding residue" evidence="1 7 8">
    <location>
        <position position="379"/>
    </location>
    <ligand>
        <name>heme</name>
        <dbReference type="ChEBI" id="CHEBI:30413"/>
    </ligand>
    <ligandPart>
        <name>Fe</name>
        <dbReference type="ChEBI" id="CHEBI:18248"/>
    </ligandPart>
</feature>
<feature type="helix" evidence="11">
    <location>
        <begin position="21"/>
        <end position="23"/>
    </location>
</feature>
<feature type="helix" evidence="11">
    <location>
        <begin position="29"/>
        <end position="32"/>
    </location>
</feature>
<feature type="helix" evidence="11">
    <location>
        <begin position="36"/>
        <end position="49"/>
    </location>
</feature>
<feature type="strand" evidence="11">
    <location>
        <begin position="51"/>
        <end position="55"/>
    </location>
</feature>
<feature type="strand" evidence="11">
    <location>
        <begin position="61"/>
        <end position="63"/>
    </location>
</feature>
<feature type="strand" evidence="11">
    <location>
        <begin position="69"/>
        <end position="72"/>
    </location>
</feature>
<feature type="helix" evidence="11">
    <location>
        <begin position="75"/>
        <end position="83"/>
    </location>
</feature>
<feature type="turn" evidence="11">
    <location>
        <begin position="85"/>
        <end position="87"/>
    </location>
</feature>
<feature type="strand" evidence="11">
    <location>
        <begin position="94"/>
        <end position="97"/>
    </location>
</feature>
<feature type="helix" evidence="11">
    <location>
        <begin position="101"/>
        <end position="103"/>
    </location>
</feature>
<feature type="turn" evidence="11">
    <location>
        <begin position="104"/>
        <end position="106"/>
    </location>
</feature>
<feature type="helix" evidence="11">
    <location>
        <begin position="110"/>
        <end position="112"/>
    </location>
</feature>
<feature type="helix" evidence="11">
    <location>
        <begin position="117"/>
        <end position="125"/>
    </location>
</feature>
<feature type="helix" evidence="11">
    <location>
        <begin position="126"/>
        <end position="129"/>
    </location>
</feature>
<feature type="helix" evidence="11">
    <location>
        <begin position="131"/>
        <end position="135"/>
    </location>
</feature>
<feature type="helix" evidence="11">
    <location>
        <begin position="138"/>
        <end position="155"/>
    </location>
</feature>
<feature type="strand" evidence="11">
    <location>
        <begin position="159"/>
        <end position="162"/>
    </location>
</feature>
<feature type="helix" evidence="11">
    <location>
        <begin position="163"/>
        <end position="166"/>
    </location>
</feature>
<feature type="turn" evidence="11">
    <location>
        <begin position="167"/>
        <end position="169"/>
    </location>
</feature>
<feature type="helix" evidence="11">
    <location>
        <begin position="170"/>
        <end position="180"/>
    </location>
</feature>
<feature type="helix" evidence="11">
    <location>
        <begin position="184"/>
        <end position="186"/>
    </location>
</feature>
<feature type="helix" evidence="11">
    <location>
        <begin position="187"/>
        <end position="197"/>
    </location>
</feature>
<feature type="turn" evidence="11">
    <location>
        <begin position="203"/>
        <end position="205"/>
    </location>
</feature>
<feature type="helix" evidence="11">
    <location>
        <begin position="209"/>
        <end position="232"/>
    </location>
</feature>
<feature type="helix" evidence="11">
    <location>
        <begin position="238"/>
        <end position="244"/>
    </location>
</feature>
<feature type="strand" evidence="9">
    <location>
        <begin position="246"/>
        <end position="251"/>
    </location>
</feature>
<feature type="helix" evidence="11">
    <location>
        <begin position="254"/>
        <end position="285"/>
    </location>
</feature>
<feature type="helix" evidence="11">
    <location>
        <begin position="287"/>
        <end position="294"/>
    </location>
</feature>
<feature type="helix" evidence="11">
    <location>
        <begin position="297"/>
        <end position="312"/>
    </location>
</feature>
<feature type="strand" evidence="11">
    <location>
        <begin position="317"/>
        <end position="324"/>
    </location>
</feature>
<feature type="strand" evidence="11">
    <location>
        <begin position="326"/>
        <end position="328"/>
    </location>
</feature>
<feature type="strand" evidence="11">
    <location>
        <begin position="331"/>
        <end position="333"/>
    </location>
</feature>
<feature type="strand" evidence="11">
    <location>
        <begin position="338"/>
        <end position="342"/>
    </location>
</feature>
<feature type="helix" evidence="11">
    <location>
        <begin position="343"/>
        <end position="346"/>
    </location>
</feature>
<feature type="turn" evidence="11">
    <location>
        <begin position="350"/>
        <end position="352"/>
    </location>
</feature>
<feature type="strand" evidence="10">
    <location>
        <begin position="353"/>
        <end position="355"/>
    </location>
</feature>
<feature type="strand" evidence="11">
    <location>
        <begin position="373"/>
        <end position="375"/>
    </location>
</feature>
<feature type="helix" evidence="11">
    <location>
        <begin position="382"/>
        <end position="399"/>
    </location>
</feature>
<feature type="strand" evidence="11">
    <location>
        <begin position="404"/>
        <end position="407"/>
    </location>
</feature>
<feature type="strand" evidence="11">
    <location>
        <begin position="415"/>
        <end position="417"/>
    </location>
</feature>
<feature type="strand" evidence="11">
    <location>
        <begin position="420"/>
        <end position="422"/>
    </location>
</feature>
<feature type="strand" evidence="11">
    <location>
        <begin position="424"/>
        <end position="426"/>
    </location>
</feature>
<accession>P9WPP3</accession>
<accession>L0TBS5</accession>
<accession>P0A516</accession>
<accession>Q50696</accession>
<name>CP124_MYCTU</name>
<dbReference type="EC" id="1.14.15.14" evidence="1"/>
<dbReference type="EC" id="1.14.15.28" evidence="2"/>
<dbReference type="EMBL" id="AL123456">
    <property type="protein sequence ID" value="CCP45047.1"/>
    <property type="molecule type" value="Genomic_DNA"/>
</dbReference>
<dbReference type="PIR" id="F70729">
    <property type="entry name" value="F70729"/>
</dbReference>
<dbReference type="RefSeq" id="NP_216782.1">
    <property type="nucleotide sequence ID" value="NC_000962.3"/>
</dbReference>
<dbReference type="RefSeq" id="WP_003411654.1">
    <property type="nucleotide sequence ID" value="NZ_NVQJ01000008.1"/>
</dbReference>
<dbReference type="PDB" id="2WM4">
    <property type="method" value="X-ray"/>
    <property type="resolution" value="2.11 A"/>
    <property type="chains" value="A=1-428"/>
</dbReference>
<dbReference type="PDB" id="2WM5">
    <property type="method" value="X-ray"/>
    <property type="resolution" value="1.50 A"/>
    <property type="chains" value="A=1-428"/>
</dbReference>
<dbReference type="PDB" id="6T0F">
    <property type="method" value="X-ray"/>
    <property type="resolution" value="1.65 A"/>
    <property type="chains" value="A/B/C/D=1-428"/>
</dbReference>
<dbReference type="PDB" id="6T0G">
    <property type="method" value="X-ray"/>
    <property type="resolution" value="1.30 A"/>
    <property type="chains" value="A=1-428"/>
</dbReference>
<dbReference type="PDB" id="6T0H">
    <property type="method" value="X-ray"/>
    <property type="resolution" value="1.18 A"/>
    <property type="chains" value="A=1-428"/>
</dbReference>
<dbReference type="PDB" id="6T0J">
    <property type="method" value="X-ray"/>
    <property type="resolution" value="1.25 A"/>
    <property type="chains" value="A=1-428"/>
</dbReference>
<dbReference type="PDB" id="6T0K">
    <property type="method" value="X-ray"/>
    <property type="resolution" value="1.18 A"/>
    <property type="chains" value="A=1-428"/>
</dbReference>
<dbReference type="PDB" id="6T0L">
    <property type="method" value="X-ray"/>
    <property type="resolution" value="1.80 A"/>
    <property type="chains" value="A=1-428"/>
</dbReference>
<dbReference type="PDB" id="7ZB9">
    <property type="method" value="X-ray"/>
    <property type="resolution" value="1.15 A"/>
    <property type="chains" value="A=1-428"/>
</dbReference>
<dbReference type="PDBsum" id="2WM4"/>
<dbReference type="PDBsum" id="2WM5"/>
<dbReference type="PDBsum" id="6T0F"/>
<dbReference type="PDBsum" id="6T0G"/>
<dbReference type="PDBsum" id="6T0H"/>
<dbReference type="PDBsum" id="6T0J"/>
<dbReference type="PDBsum" id="6T0K"/>
<dbReference type="PDBsum" id="6T0L"/>
<dbReference type="PDBsum" id="7ZB9"/>
<dbReference type="SMR" id="P9WPP3"/>
<dbReference type="FunCoup" id="P9WPP3">
    <property type="interactions" value="12"/>
</dbReference>
<dbReference type="STRING" id="83332.Rv2266"/>
<dbReference type="SwissLipids" id="SLP:000001010"/>
<dbReference type="PaxDb" id="83332-Rv2266"/>
<dbReference type="DNASU" id="887763"/>
<dbReference type="GeneID" id="45426248"/>
<dbReference type="GeneID" id="887763"/>
<dbReference type="KEGG" id="mtu:Rv2266"/>
<dbReference type="KEGG" id="mtv:RVBD_2266"/>
<dbReference type="TubercuList" id="Rv2266"/>
<dbReference type="eggNOG" id="COG2124">
    <property type="taxonomic scope" value="Bacteria"/>
</dbReference>
<dbReference type="InParanoid" id="P9WPP3"/>
<dbReference type="OrthoDB" id="5241086at2"/>
<dbReference type="PhylomeDB" id="P9WPP3"/>
<dbReference type="BioCyc" id="MetaCyc:G185E-6483-MONOMER"/>
<dbReference type="BRENDA" id="1.14.15.14">
    <property type="organism ID" value="3445"/>
</dbReference>
<dbReference type="SABIO-RK" id="P9WPP3"/>
<dbReference type="UniPathway" id="UPA01022"/>
<dbReference type="EvolutionaryTrace" id="P9WPP3"/>
<dbReference type="Proteomes" id="UP000001584">
    <property type="component" value="Chromosome"/>
</dbReference>
<dbReference type="GO" id="GO:0036199">
    <property type="term" value="F:cholest-4-en-3-one 26-monooxygenase activity"/>
    <property type="evidence" value="ECO:0000314"/>
    <property type="project" value="UniProtKB"/>
</dbReference>
<dbReference type="GO" id="GO:0031073">
    <property type="term" value="F:cholesterol 26-hydroxylase activity"/>
    <property type="evidence" value="ECO:0000314"/>
    <property type="project" value="UniProtKB"/>
</dbReference>
<dbReference type="GO" id="GO:0020037">
    <property type="term" value="F:heme binding"/>
    <property type="evidence" value="ECO:0000314"/>
    <property type="project" value="UniProtKB"/>
</dbReference>
<dbReference type="GO" id="GO:0005506">
    <property type="term" value="F:iron ion binding"/>
    <property type="evidence" value="ECO:0007669"/>
    <property type="project" value="InterPro"/>
</dbReference>
<dbReference type="GO" id="GO:0070402">
    <property type="term" value="F:NADPH binding"/>
    <property type="evidence" value="ECO:0000314"/>
    <property type="project" value="UniProtKB"/>
</dbReference>
<dbReference type="GO" id="GO:0008395">
    <property type="term" value="F:steroid hydroxylase activity"/>
    <property type="evidence" value="ECO:0000318"/>
    <property type="project" value="GO_Central"/>
</dbReference>
<dbReference type="GO" id="GO:0006707">
    <property type="term" value="P:cholesterol catabolic process"/>
    <property type="evidence" value="ECO:0000318"/>
    <property type="project" value="GO_Central"/>
</dbReference>
<dbReference type="GO" id="GO:0010430">
    <property type="term" value="P:fatty acid omega-oxidation"/>
    <property type="evidence" value="ECO:0000314"/>
    <property type="project" value="MTBBASE"/>
</dbReference>
<dbReference type="GO" id="GO:0097089">
    <property type="term" value="P:methyl-branched fatty acid metabolic process"/>
    <property type="evidence" value="ECO:0000314"/>
    <property type="project" value="MTBBASE"/>
</dbReference>
<dbReference type="CDD" id="cd11033">
    <property type="entry name" value="CYP142-like"/>
    <property type="match status" value="1"/>
</dbReference>
<dbReference type="FunFam" id="1.10.630.10:FF:000127">
    <property type="entry name" value="Cytochrome P450 Cyp124"/>
    <property type="match status" value="1"/>
</dbReference>
<dbReference type="Gene3D" id="1.10.630.10">
    <property type="entry name" value="Cytochrome P450"/>
    <property type="match status" value="1"/>
</dbReference>
<dbReference type="InterPro" id="IPR001128">
    <property type="entry name" value="Cyt_P450"/>
</dbReference>
<dbReference type="InterPro" id="IPR002397">
    <property type="entry name" value="Cyt_P450_B"/>
</dbReference>
<dbReference type="InterPro" id="IPR036396">
    <property type="entry name" value="Cyt_P450_sf"/>
</dbReference>
<dbReference type="PANTHER" id="PTHR46696:SF4">
    <property type="entry name" value="BIOTIN BIOSYNTHESIS CYTOCHROME P450"/>
    <property type="match status" value="1"/>
</dbReference>
<dbReference type="PANTHER" id="PTHR46696">
    <property type="entry name" value="P450, PUTATIVE (EUROFUNG)-RELATED"/>
    <property type="match status" value="1"/>
</dbReference>
<dbReference type="Pfam" id="PF00067">
    <property type="entry name" value="p450"/>
    <property type="match status" value="2"/>
</dbReference>
<dbReference type="PRINTS" id="PR00359">
    <property type="entry name" value="BP450"/>
</dbReference>
<dbReference type="SUPFAM" id="SSF48264">
    <property type="entry name" value="Cytochrome P450"/>
    <property type="match status" value="1"/>
</dbReference>
<evidence type="ECO:0000269" key="1">
    <source>
    </source>
</evidence>
<evidence type="ECO:0000269" key="2">
    <source>
    </source>
</evidence>
<evidence type="ECO:0000303" key="3">
    <source>
    </source>
</evidence>
<evidence type="ECO:0000303" key="4">
    <source>
    </source>
</evidence>
<evidence type="ECO:0000305" key="5"/>
<evidence type="ECO:0000305" key="6">
    <source>
    </source>
</evidence>
<evidence type="ECO:0007744" key="7">
    <source>
        <dbReference type="PDB" id="2WM4"/>
    </source>
</evidence>
<evidence type="ECO:0007744" key="8">
    <source>
        <dbReference type="PDB" id="2WM5"/>
    </source>
</evidence>
<evidence type="ECO:0007829" key="9">
    <source>
        <dbReference type="PDB" id="2WM4"/>
    </source>
</evidence>
<evidence type="ECO:0007829" key="10">
    <source>
        <dbReference type="PDB" id="6T0K"/>
    </source>
</evidence>
<evidence type="ECO:0007829" key="11">
    <source>
        <dbReference type="PDB" id="7ZB9"/>
    </source>
</evidence>
<proteinExistence type="evidence at protein level"/>